<name>COE2_MOUSE</name>
<sequence>MFGIQDTLGRGPALKDKSLGAEMDSVRSWVRNVGVVDANVAAQSGVALSRAHFEKQPPSNLRKSNFFHFVLALYDRQGQPVEIERTAFVDFVENDKEQGNEKTNNGTHYKLQLLYSNGVRTEQDLYVRLIDSVTKQPIAYEGQNKNPEMCRVLLTHEVMCSRCCEKKSCGNRNETPSDPVIIDRFFLKFFLKCNQNCLKTAGNPRDMRRFQVVLSTTVNVDGHVLAVSDNMFVHNNSKHGRRARRLDPSEATPCIKAISPSEGWTTGGAMVIIIGDNFFDGLQVVFGTMLVWSELITPHAIRVQTPPRHIPGVVEVTLSYKSKQFCKGAPGRFIYTALNEPTIDYGFQRLQKVIPRHPGDPERLAKEMLLKRAADLVEALYGTPHNNQDIILKRAADIAEALYSVPRNPSQIPALSSSPAHSGMMGINSYGSQLGVSISESTQGNNQGYIRNTSSISPRGYSSSSTPQQSNYSTSSNSMNGYSNVPMANLGVPGSPGFLNGSPTGSPYGIMSSSPTVGSSSTSSILPFSSSVFPAVKQKSAFAPVIRPQGSPSPACSSGNGNGFRAMTGLVVPPM</sequence>
<proteinExistence type="evidence at protein level"/>
<comment type="function">
    <text evidence="4">Transcription factor that, in osteoblasts, activates the decoy receptor for RANKL, TNFRSF11B, which in turn regulates osteoclast differentiation. Acts in synergy with the Wnt-responsive LEF1/CTNNB1 pathway. Recognizes variations of the palindromic sequence 5'-ATTCCCNNGGGAATT-3'.</text>
</comment>
<comment type="subunit">
    <text evidence="5 6">Forms either a homodimer or a heterodimer with a related family member (PubMed:9151732). Interacts with SIX1 (PubMed:27923061).</text>
</comment>
<comment type="subcellular location">
    <subcellularLocation>
        <location evidence="7">Nucleus</location>
    </subcellularLocation>
</comment>
<comment type="tissue specificity">
    <text>In adult expressed in olfactory epithelium and at a much lower level in Purkinje cells of the cerebellum. In embryo expressed in epithalamus, in cells near the ventricular zone of mesencephalon and on the ventral surface of rhombencephalon, in the developing vomeronasal organ, at a lower level in developing spinal cord. Not expressed in developing retina, inner ear, dorsal root ganglia, trigeminal ganglia and glossopharyngeal ganglia.</text>
</comment>
<comment type="developmental stage">
    <text evidence="4">First detected at 9.0 dpc in the first and second archial arches. At 10.0 dpc and 10.5 dpc, expressed in somites, especially the forming sclerotomes. At 12.5 dpc, found in dorsal root ganglia. At 16.5 dpc, expressed in bone-forming areas and adipose tissues, as well as in specific neural tissues. In bone-forming areas, expressed along the mesenchymal condensation at 14.5 dpc, in the perichondrium and in cells invading the cartilagenous structures at 16.5 dpc. In 18.5 dpc tibias, scattered throughout the trabecular/cancellous bone area. In vitro, expression is induced during differentiation of immature osteoblasts, and then declines.</text>
</comment>
<comment type="similarity">
    <text evidence="7">Belongs to the COE family.</text>
</comment>
<comment type="sequence caution" evidence="7">
    <conflict type="erroneous initiation">
        <sequence resource="EMBL-CDS" id="AAB58423"/>
    </conflict>
</comment>
<keyword id="KW-0010">Activator</keyword>
<keyword id="KW-0217">Developmental protein</keyword>
<keyword id="KW-0238">DNA-binding</keyword>
<keyword id="KW-0479">Metal-binding</keyword>
<keyword id="KW-0539">Nucleus</keyword>
<keyword id="KW-1185">Reference proteome</keyword>
<keyword id="KW-0804">Transcription</keyword>
<keyword id="KW-0805">Transcription regulation</keyword>
<keyword id="KW-0862">Zinc</keyword>
<keyword id="KW-0863">Zinc-finger</keyword>
<evidence type="ECO:0000250" key="1"/>
<evidence type="ECO:0000255" key="2"/>
<evidence type="ECO:0000256" key="3">
    <source>
        <dbReference type="SAM" id="MobiDB-lite"/>
    </source>
</evidence>
<evidence type="ECO:0000269" key="4">
    <source>
    </source>
</evidence>
<evidence type="ECO:0000269" key="5">
    <source>
    </source>
</evidence>
<evidence type="ECO:0000269" key="6">
    <source>
    </source>
</evidence>
<evidence type="ECO:0000305" key="7"/>
<accession>O08792</accession>
<accession>Q543D5</accession>
<organism>
    <name type="scientific">Mus musculus</name>
    <name type="common">Mouse</name>
    <dbReference type="NCBI Taxonomy" id="10090"/>
    <lineage>
        <taxon>Eukaryota</taxon>
        <taxon>Metazoa</taxon>
        <taxon>Chordata</taxon>
        <taxon>Craniata</taxon>
        <taxon>Vertebrata</taxon>
        <taxon>Euteleostomi</taxon>
        <taxon>Mammalia</taxon>
        <taxon>Eutheria</taxon>
        <taxon>Euarchontoglires</taxon>
        <taxon>Glires</taxon>
        <taxon>Rodentia</taxon>
        <taxon>Myomorpha</taxon>
        <taxon>Muroidea</taxon>
        <taxon>Muridae</taxon>
        <taxon>Murinae</taxon>
        <taxon>Mus</taxon>
        <taxon>Mus</taxon>
    </lineage>
</organism>
<reference key="1">
    <citation type="journal article" date="1997" name="J. Biol. Chem.">
        <title>Mmot1, a new helix-loop-helix transcription factor gene displaying a sharp expression boundary in the embryonic mouse brain.</title>
        <authorList>
            <person name="Malgaretti N."/>
            <person name="Pozzoli O."/>
            <person name="Bosetti A."/>
            <person name="Corradi A."/>
            <person name="Ciarmatori S."/>
            <person name="Panigada M."/>
            <person name="Bianchi M.E."/>
            <person name="Martinez S."/>
            <person name="Consalez G.G."/>
        </authorList>
    </citation>
    <scope>NUCLEOTIDE SEQUENCE [MRNA]</scope>
    <scope>CHARACTERIZATION</scope>
    <source>
        <tissue>Embryo</tissue>
    </source>
</reference>
<reference key="2">
    <citation type="journal article" date="1997" name="J. Neurosci.">
        <title>The characterization of the Olf-1/EBF-like HLH transcription factor family: implications in olfactory gene regulation and neuronal development.</title>
        <authorList>
            <person name="Wang S.S."/>
            <person name="Tsai R.Y.L."/>
            <person name="Reed R.R."/>
        </authorList>
    </citation>
    <scope>NUCLEOTIDE SEQUENCE [MRNA]</scope>
    <scope>SUBUNIT</scope>
    <source>
        <strain>CD-1</strain>
        <tissue>Embryo</tissue>
    </source>
</reference>
<reference key="3">
    <citation type="journal article" date="1997" name="Dev. Dyn.">
        <title>Family of Ebf/Olf-1-related genes potentially involved in neuronal differentiation and regional specification in the central nervous system.</title>
        <authorList>
            <person name="Garel S."/>
            <person name="Marin F."/>
            <person name="Mattei M.-G."/>
            <person name="Vesque C."/>
            <person name="Vincent A."/>
            <person name="Charnay P."/>
        </authorList>
    </citation>
    <scope>NUCLEOTIDE SEQUENCE [MRNA]</scope>
    <source>
        <tissue>Embryo</tissue>
    </source>
</reference>
<reference key="4">
    <citation type="journal article" date="2005" name="Science">
        <title>The transcriptional landscape of the mammalian genome.</title>
        <authorList>
            <person name="Carninci P."/>
            <person name="Kasukawa T."/>
            <person name="Katayama S."/>
            <person name="Gough J."/>
            <person name="Frith M.C."/>
            <person name="Maeda N."/>
            <person name="Oyama R."/>
            <person name="Ravasi T."/>
            <person name="Lenhard B."/>
            <person name="Wells C."/>
            <person name="Kodzius R."/>
            <person name="Shimokawa K."/>
            <person name="Bajic V.B."/>
            <person name="Brenner S.E."/>
            <person name="Batalov S."/>
            <person name="Forrest A.R."/>
            <person name="Zavolan M."/>
            <person name="Davis M.J."/>
            <person name="Wilming L.G."/>
            <person name="Aidinis V."/>
            <person name="Allen J.E."/>
            <person name="Ambesi-Impiombato A."/>
            <person name="Apweiler R."/>
            <person name="Aturaliya R.N."/>
            <person name="Bailey T.L."/>
            <person name="Bansal M."/>
            <person name="Baxter L."/>
            <person name="Beisel K.W."/>
            <person name="Bersano T."/>
            <person name="Bono H."/>
            <person name="Chalk A.M."/>
            <person name="Chiu K.P."/>
            <person name="Choudhary V."/>
            <person name="Christoffels A."/>
            <person name="Clutterbuck D.R."/>
            <person name="Crowe M.L."/>
            <person name="Dalla E."/>
            <person name="Dalrymple B.P."/>
            <person name="de Bono B."/>
            <person name="Della Gatta G."/>
            <person name="di Bernardo D."/>
            <person name="Down T."/>
            <person name="Engstrom P."/>
            <person name="Fagiolini M."/>
            <person name="Faulkner G."/>
            <person name="Fletcher C.F."/>
            <person name="Fukushima T."/>
            <person name="Furuno M."/>
            <person name="Futaki S."/>
            <person name="Gariboldi M."/>
            <person name="Georgii-Hemming P."/>
            <person name="Gingeras T.R."/>
            <person name="Gojobori T."/>
            <person name="Green R.E."/>
            <person name="Gustincich S."/>
            <person name="Harbers M."/>
            <person name="Hayashi Y."/>
            <person name="Hensch T.K."/>
            <person name="Hirokawa N."/>
            <person name="Hill D."/>
            <person name="Huminiecki L."/>
            <person name="Iacono M."/>
            <person name="Ikeo K."/>
            <person name="Iwama A."/>
            <person name="Ishikawa T."/>
            <person name="Jakt M."/>
            <person name="Kanapin A."/>
            <person name="Katoh M."/>
            <person name="Kawasawa Y."/>
            <person name="Kelso J."/>
            <person name="Kitamura H."/>
            <person name="Kitano H."/>
            <person name="Kollias G."/>
            <person name="Krishnan S.P."/>
            <person name="Kruger A."/>
            <person name="Kummerfeld S.K."/>
            <person name="Kurochkin I.V."/>
            <person name="Lareau L.F."/>
            <person name="Lazarevic D."/>
            <person name="Lipovich L."/>
            <person name="Liu J."/>
            <person name="Liuni S."/>
            <person name="McWilliam S."/>
            <person name="Madan Babu M."/>
            <person name="Madera M."/>
            <person name="Marchionni L."/>
            <person name="Matsuda H."/>
            <person name="Matsuzawa S."/>
            <person name="Miki H."/>
            <person name="Mignone F."/>
            <person name="Miyake S."/>
            <person name="Morris K."/>
            <person name="Mottagui-Tabar S."/>
            <person name="Mulder N."/>
            <person name="Nakano N."/>
            <person name="Nakauchi H."/>
            <person name="Ng P."/>
            <person name="Nilsson R."/>
            <person name="Nishiguchi S."/>
            <person name="Nishikawa S."/>
            <person name="Nori F."/>
            <person name="Ohara O."/>
            <person name="Okazaki Y."/>
            <person name="Orlando V."/>
            <person name="Pang K.C."/>
            <person name="Pavan W.J."/>
            <person name="Pavesi G."/>
            <person name="Pesole G."/>
            <person name="Petrovsky N."/>
            <person name="Piazza S."/>
            <person name="Reed J."/>
            <person name="Reid J.F."/>
            <person name="Ring B.Z."/>
            <person name="Ringwald M."/>
            <person name="Rost B."/>
            <person name="Ruan Y."/>
            <person name="Salzberg S.L."/>
            <person name="Sandelin A."/>
            <person name="Schneider C."/>
            <person name="Schoenbach C."/>
            <person name="Sekiguchi K."/>
            <person name="Semple C.A."/>
            <person name="Seno S."/>
            <person name="Sessa L."/>
            <person name="Sheng Y."/>
            <person name="Shibata Y."/>
            <person name="Shimada H."/>
            <person name="Shimada K."/>
            <person name="Silva D."/>
            <person name="Sinclair B."/>
            <person name="Sperling S."/>
            <person name="Stupka E."/>
            <person name="Sugiura K."/>
            <person name="Sultana R."/>
            <person name="Takenaka Y."/>
            <person name="Taki K."/>
            <person name="Tammoja K."/>
            <person name="Tan S.L."/>
            <person name="Tang S."/>
            <person name="Taylor M.S."/>
            <person name="Tegner J."/>
            <person name="Teichmann S.A."/>
            <person name="Ueda H.R."/>
            <person name="van Nimwegen E."/>
            <person name="Verardo R."/>
            <person name="Wei C.L."/>
            <person name="Yagi K."/>
            <person name="Yamanishi H."/>
            <person name="Zabarovsky E."/>
            <person name="Zhu S."/>
            <person name="Zimmer A."/>
            <person name="Hide W."/>
            <person name="Bult C."/>
            <person name="Grimmond S.M."/>
            <person name="Teasdale R.D."/>
            <person name="Liu E.T."/>
            <person name="Brusic V."/>
            <person name="Quackenbush J."/>
            <person name="Wahlestedt C."/>
            <person name="Mattick J.S."/>
            <person name="Hume D.A."/>
            <person name="Kai C."/>
            <person name="Sasaki D."/>
            <person name="Tomaru Y."/>
            <person name="Fukuda S."/>
            <person name="Kanamori-Katayama M."/>
            <person name="Suzuki M."/>
            <person name="Aoki J."/>
            <person name="Arakawa T."/>
            <person name="Iida J."/>
            <person name="Imamura K."/>
            <person name="Itoh M."/>
            <person name="Kato T."/>
            <person name="Kawaji H."/>
            <person name="Kawagashira N."/>
            <person name="Kawashima T."/>
            <person name="Kojima M."/>
            <person name="Kondo S."/>
            <person name="Konno H."/>
            <person name="Nakano K."/>
            <person name="Ninomiya N."/>
            <person name="Nishio T."/>
            <person name="Okada M."/>
            <person name="Plessy C."/>
            <person name="Shibata K."/>
            <person name="Shiraki T."/>
            <person name="Suzuki S."/>
            <person name="Tagami M."/>
            <person name="Waki K."/>
            <person name="Watahiki A."/>
            <person name="Okamura-Oho Y."/>
            <person name="Suzuki H."/>
            <person name="Kawai J."/>
            <person name="Hayashizaki Y."/>
        </authorList>
    </citation>
    <scope>NUCLEOTIDE SEQUENCE [LARGE SCALE MRNA]</scope>
    <source>
        <strain>C57BL/6J</strain>
        <tissue>Cerebellum</tissue>
        <tissue>Embryonic head</tissue>
    </source>
</reference>
<reference key="5">
    <citation type="journal article" date="2004" name="Genome Res.">
        <title>The status, quality, and expansion of the NIH full-length cDNA project: the Mammalian Gene Collection (MGC).</title>
        <authorList>
            <consortium name="The MGC Project Team"/>
        </authorList>
    </citation>
    <scope>NUCLEOTIDE SEQUENCE [LARGE SCALE MRNA]</scope>
    <source>
        <strain>C57BL/6J</strain>
        <tissue>Brain</tissue>
        <tissue>Olfactory epithelium</tissue>
    </source>
</reference>
<reference key="6">
    <citation type="journal article" date="2005" name="Dev. Cell">
        <title>EBF2 regulates osteoblast-dependent differentiation of osteoclasts.</title>
        <authorList>
            <person name="Kieslinger M."/>
            <person name="Folberth S."/>
            <person name="Dobreva G."/>
            <person name="Dorn T."/>
            <person name="Croci L."/>
            <person name="Erben R."/>
            <person name="Consalez G.G."/>
            <person name="Grosschedl R."/>
        </authorList>
    </citation>
    <scope>FUNCTION</scope>
    <scope>DEVELOPMENTAL STAGE</scope>
</reference>
<reference key="7">
    <citation type="journal article" date="2016" name="PLoS Genet.">
        <title>Comparative Transcriptomic and Epigenomic Analyses Reveal New Regulators of Murine Brown Adipogenesis.</title>
        <authorList>
            <person name="Brunmeir R."/>
            <person name="Wu J."/>
            <person name="Peng X."/>
            <person name="Kim S.Y."/>
            <person name="Julien S.G."/>
            <person name="Zhang Q."/>
            <person name="Xie W."/>
            <person name="Xu F."/>
        </authorList>
    </citation>
    <scope>INTERACTION WITH SIX1</scope>
</reference>
<feature type="chain" id="PRO_0000107829" description="Transcription factor COE2">
    <location>
        <begin position="1"/>
        <end position="575"/>
    </location>
</feature>
<feature type="domain" description="IPT/TIG">
    <location>
        <begin position="253"/>
        <end position="336"/>
    </location>
</feature>
<feature type="zinc finger region" description="C5-type" evidence="2">
    <location>
        <begin position="150"/>
        <end position="169"/>
    </location>
</feature>
<feature type="region of interest" description="Interaction with DNA" evidence="1">
    <location>
        <begin position="62"/>
        <end position="65"/>
    </location>
</feature>
<feature type="region of interest" description="Interaction with DNA" evidence="1">
    <location>
        <begin position="196"/>
        <end position="203"/>
    </location>
</feature>
<feature type="region of interest" description="Interaction with DNA" evidence="1">
    <location>
        <begin position="235"/>
        <end position="238"/>
    </location>
</feature>
<feature type="region of interest" description="Disordered" evidence="3">
    <location>
        <begin position="441"/>
        <end position="479"/>
    </location>
</feature>
<feature type="compositionally biased region" description="Polar residues" evidence="3">
    <location>
        <begin position="441"/>
        <end position="453"/>
    </location>
</feature>
<feature type="compositionally biased region" description="Low complexity" evidence="3">
    <location>
        <begin position="454"/>
        <end position="479"/>
    </location>
</feature>
<feature type="site" description="Interaction with DNA" evidence="1">
    <location>
        <position position="162"/>
    </location>
</feature>
<feature type="site" description="Interaction with DNA" evidence="1">
    <location>
        <position position="171"/>
    </location>
</feature>
<feature type="sequence conflict" description="In Ref. 3; AAC64322." evidence="7" ref="3">
    <original>D</original>
    <variation>V</variation>
    <location>
        <position position="37"/>
    </location>
</feature>
<protein>
    <recommendedName>
        <fullName>Transcription factor COE2</fullName>
    </recommendedName>
    <alternativeName>
        <fullName>Early B-cell factor 2</fullName>
        <shortName>EBF-2</shortName>
    </alternativeName>
    <alternativeName>
        <fullName>Metencephalon-mesencephalon-olfactory transcription factor 1</fullName>
        <shortName>MET-mesencephalon-olfactory TF1</shortName>
        <shortName>MET-mesencephalon-olfactory transcription factor 1</shortName>
    </alternativeName>
    <alternativeName>
        <fullName>Olf-1/EBF-like 3</fullName>
        <shortName>O/E-3</shortName>
        <shortName>OE-3</shortName>
    </alternativeName>
</protein>
<gene>
    <name type="primary">Ebf2</name>
    <name type="synonym">Coe2</name>
    <name type="synonym">Mmot1</name>
</gene>
<dbReference type="EMBL" id="U71189">
    <property type="protein sequence ID" value="AAB58423.1"/>
    <property type="status" value="ALT_INIT"/>
    <property type="molecule type" value="mRNA"/>
</dbReference>
<dbReference type="EMBL" id="U92703">
    <property type="protein sequence ID" value="AAB58323.1"/>
    <property type="molecule type" value="mRNA"/>
</dbReference>
<dbReference type="EMBL" id="U82441">
    <property type="protein sequence ID" value="AAC64322.1"/>
    <property type="molecule type" value="mRNA"/>
</dbReference>
<dbReference type="EMBL" id="AK053013">
    <property type="protein sequence ID" value="BAC35239.1"/>
    <property type="molecule type" value="mRNA"/>
</dbReference>
<dbReference type="EMBL" id="AK139262">
    <property type="protein sequence ID" value="BAE23936.1"/>
    <property type="molecule type" value="mRNA"/>
</dbReference>
<dbReference type="EMBL" id="BC049188">
    <property type="protein sequence ID" value="AAH49188.1"/>
    <property type="molecule type" value="mRNA"/>
</dbReference>
<dbReference type="EMBL" id="BC050922">
    <property type="protein sequence ID" value="AAH50922.1"/>
    <property type="molecule type" value="mRNA"/>
</dbReference>
<dbReference type="CCDS" id="CCDS27228.1"/>
<dbReference type="RefSeq" id="NP_001263316.1">
    <property type="nucleotide sequence ID" value="NM_001276387.1"/>
</dbReference>
<dbReference type="RefSeq" id="NP_001347131.1">
    <property type="nucleotide sequence ID" value="NM_001360202.1"/>
</dbReference>
<dbReference type="RefSeq" id="NP_034225.1">
    <property type="nucleotide sequence ID" value="NM_010095.6"/>
</dbReference>
<dbReference type="RefSeq" id="XP_011243247.1">
    <property type="nucleotide sequence ID" value="XM_011244945.2"/>
</dbReference>
<dbReference type="SMR" id="O08792"/>
<dbReference type="BioGRID" id="199359">
    <property type="interactions" value="1"/>
</dbReference>
<dbReference type="FunCoup" id="O08792">
    <property type="interactions" value="146"/>
</dbReference>
<dbReference type="IntAct" id="O08792">
    <property type="interactions" value="1"/>
</dbReference>
<dbReference type="MINT" id="O08792"/>
<dbReference type="STRING" id="10090.ENSMUSP00000135500"/>
<dbReference type="GlyGen" id="O08792">
    <property type="glycosylation" value="1 site"/>
</dbReference>
<dbReference type="iPTMnet" id="O08792"/>
<dbReference type="PhosphoSitePlus" id="O08792"/>
<dbReference type="PaxDb" id="10090-ENSMUSP00000022637"/>
<dbReference type="PeptideAtlas" id="O08792"/>
<dbReference type="ProteomicsDB" id="285236"/>
<dbReference type="Antibodypedia" id="22905">
    <property type="antibodies" value="108 antibodies from 21 providers"/>
</dbReference>
<dbReference type="DNASU" id="13592"/>
<dbReference type="Ensembl" id="ENSMUST00000022637.14">
    <property type="protein sequence ID" value="ENSMUSP00000022637.8"/>
    <property type="gene ID" value="ENSMUSG00000022053.14"/>
</dbReference>
<dbReference type="Ensembl" id="ENSMUST00000176029.2">
    <property type="protein sequence ID" value="ENSMUSP00000135782.2"/>
    <property type="gene ID" value="ENSMUSG00000022053.14"/>
</dbReference>
<dbReference type="Ensembl" id="ENSMUST00000176161.8">
    <property type="protein sequence ID" value="ENSMUSP00000135500.2"/>
    <property type="gene ID" value="ENSMUSG00000022053.14"/>
</dbReference>
<dbReference type="GeneID" id="13592"/>
<dbReference type="KEGG" id="mmu:13592"/>
<dbReference type="UCSC" id="uc007ukw.2">
    <property type="organism name" value="mouse"/>
</dbReference>
<dbReference type="AGR" id="MGI:894332"/>
<dbReference type="CTD" id="64641"/>
<dbReference type="MGI" id="MGI:894332">
    <property type="gene designation" value="Ebf2"/>
</dbReference>
<dbReference type="VEuPathDB" id="HostDB:ENSMUSG00000022053"/>
<dbReference type="eggNOG" id="KOG3836">
    <property type="taxonomic scope" value="Eukaryota"/>
</dbReference>
<dbReference type="GeneTree" id="ENSGT00950000182859"/>
<dbReference type="HOGENOM" id="CLU_016320_3_1_1"/>
<dbReference type="InParanoid" id="O08792"/>
<dbReference type="OMA" id="QGYMRNS"/>
<dbReference type="OrthoDB" id="25246at2759"/>
<dbReference type="PhylomeDB" id="O08792"/>
<dbReference type="TreeFam" id="TF313391"/>
<dbReference type="BioGRID-ORCS" id="13592">
    <property type="hits" value="1 hit in 78 CRISPR screens"/>
</dbReference>
<dbReference type="ChiTaRS" id="Ebf2">
    <property type="organism name" value="mouse"/>
</dbReference>
<dbReference type="PRO" id="PR:O08792"/>
<dbReference type="Proteomes" id="UP000000589">
    <property type="component" value="Chromosome 14"/>
</dbReference>
<dbReference type="RNAct" id="O08792">
    <property type="molecule type" value="protein"/>
</dbReference>
<dbReference type="Bgee" id="ENSMUSG00000022053">
    <property type="expression patterns" value="Expressed in olfactory epithelium and 169 other cell types or tissues"/>
</dbReference>
<dbReference type="GO" id="GO:0005654">
    <property type="term" value="C:nucleoplasm"/>
    <property type="evidence" value="ECO:0000304"/>
    <property type="project" value="Reactome"/>
</dbReference>
<dbReference type="GO" id="GO:0003682">
    <property type="term" value="F:chromatin binding"/>
    <property type="evidence" value="ECO:0000314"/>
    <property type="project" value="MGI"/>
</dbReference>
<dbReference type="GO" id="GO:0003677">
    <property type="term" value="F:DNA binding"/>
    <property type="evidence" value="ECO:0000314"/>
    <property type="project" value="MGI"/>
</dbReference>
<dbReference type="GO" id="GO:0001228">
    <property type="term" value="F:DNA-binding transcription activator activity, RNA polymerase II-specific"/>
    <property type="evidence" value="ECO:0000314"/>
    <property type="project" value="NTNU_SB"/>
</dbReference>
<dbReference type="GO" id="GO:0000978">
    <property type="term" value="F:RNA polymerase II cis-regulatory region sequence-specific DNA binding"/>
    <property type="evidence" value="ECO:0000314"/>
    <property type="project" value="NTNU_SB"/>
</dbReference>
<dbReference type="GO" id="GO:0008270">
    <property type="term" value="F:zinc ion binding"/>
    <property type="evidence" value="ECO:0007669"/>
    <property type="project" value="UniProtKB-KW"/>
</dbReference>
<dbReference type="GO" id="GO:0060612">
    <property type="term" value="P:adipose tissue development"/>
    <property type="evidence" value="ECO:0000315"/>
    <property type="project" value="MGI"/>
</dbReference>
<dbReference type="GO" id="GO:0050873">
    <property type="term" value="P:brown fat cell differentiation"/>
    <property type="evidence" value="ECO:0000314"/>
    <property type="project" value="MGI"/>
</dbReference>
<dbReference type="GO" id="GO:0001709">
    <property type="term" value="P:cell fate determination"/>
    <property type="evidence" value="ECO:0000314"/>
    <property type="project" value="MGI"/>
</dbReference>
<dbReference type="GO" id="GO:0120162">
    <property type="term" value="P:positive regulation of cold-induced thermogenesis"/>
    <property type="evidence" value="ECO:0000315"/>
    <property type="project" value="YuBioLab"/>
</dbReference>
<dbReference type="GO" id="GO:0045893">
    <property type="term" value="P:positive regulation of DNA-templated transcription"/>
    <property type="evidence" value="ECO:0000314"/>
    <property type="project" value="MGI"/>
</dbReference>
<dbReference type="GO" id="GO:0045944">
    <property type="term" value="P:positive regulation of transcription by RNA polymerase II"/>
    <property type="evidence" value="ECO:0000314"/>
    <property type="project" value="NTNU_SB"/>
</dbReference>
<dbReference type="CDD" id="cd11606">
    <property type="entry name" value="COE_DBD"/>
    <property type="match status" value="1"/>
</dbReference>
<dbReference type="CDD" id="cd01175">
    <property type="entry name" value="IPT_COE"/>
    <property type="match status" value="1"/>
</dbReference>
<dbReference type="FunFam" id="1.10.287.4280:FF:000001">
    <property type="entry name" value="transcription factor COE1 isoform X2"/>
    <property type="match status" value="1"/>
</dbReference>
<dbReference type="FunFam" id="2.60.40.3180:FF:000002">
    <property type="entry name" value="transcription factor COE2 isoform X1"/>
    <property type="match status" value="1"/>
</dbReference>
<dbReference type="FunFam" id="2.60.40.10:FF:001696">
    <property type="entry name" value="Transcription factor COE3"/>
    <property type="match status" value="1"/>
</dbReference>
<dbReference type="Gene3D" id="1.10.287.4280">
    <property type="match status" value="1"/>
</dbReference>
<dbReference type="Gene3D" id="2.60.40.10">
    <property type="entry name" value="Immunoglobulins"/>
    <property type="match status" value="1"/>
</dbReference>
<dbReference type="Gene3D" id="2.60.40.3180">
    <property type="entry name" value="Transcription factor COE1, DNA-binding domain"/>
    <property type="match status" value="1"/>
</dbReference>
<dbReference type="InterPro" id="IPR032200">
    <property type="entry name" value="COE_DBD"/>
</dbReference>
<dbReference type="InterPro" id="IPR038173">
    <property type="entry name" value="COE_DBD_sf"/>
</dbReference>
<dbReference type="InterPro" id="IPR032201">
    <property type="entry name" value="COE_HLH"/>
</dbReference>
<dbReference type="InterPro" id="IPR038006">
    <property type="entry name" value="COE_IPT"/>
</dbReference>
<dbReference type="InterPro" id="IPR013783">
    <property type="entry name" value="Ig-like_fold"/>
</dbReference>
<dbReference type="InterPro" id="IPR014756">
    <property type="entry name" value="Ig_E-set"/>
</dbReference>
<dbReference type="InterPro" id="IPR002909">
    <property type="entry name" value="IPT_dom"/>
</dbReference>
<dbReference type="InterPro" id="IPR003523">
    <property type="entry name" value="Transcription_factor_COE"/>
</dbReference>
<dbReference type="InterPro" id="IPR018350">
    <property type="entry name" value="Transcription_factor_COE_CS"/>
</dbReference>
<dbReference type="PANTHER" id="PTHR10747">
    <property type="entry name" value="TRANSCRIPTION FACTOR COE FAMILY MEMBER"/>
    <property type="match status" value="1"/>
</dbReference>
<dbReference type="Pfam" id="PF16422">
    <property type="entry name" value="COE1_DBD"/>
    <property type="match status" value="1"/>
</dbReference>
<dbReference type="Pfam" id="PF16423">
    <property type="entry name" value="COE1_HLH"/>
    <property type="match status" value="1"/>
</dbReference>
<dbReference type="Pfam" id="PF01833">
    <property type="entry name" value="TIG"/>
    <property type="match status" value="1"/>
</dbReference>
<dbReference type="SMART" id="SM00429">
    <property type="entry name" value="IPT"/>
    <property type="match status" value="1"/>
</dbReference>
<dbReference type="SUPFAM" id="SSF81296">
    <property type="entry name" value="E set domains"/>
    <property type="match status" value="1"/>
</dbReference>
<dbReference type="PROSITE" id="PS01345">
    <property type="entry name" value="COE"/>
    <property type="match status" value="1"/>
</dbReference>